<accession>Q0SQT0</accession>
<gene>
    <name type="ordered locus">CPR_2251</name>
</gene>
<proteinExistence type="inferred from homology"/>
<evidence type="ECO:0000255" key="1">
    <source>
        <dbReference type="HAMAP-Rule" id="MF_00489"/>
    </source>
</evidence>
<organism>
    <name type="scientific">Clostridium perfringens (strain SM101 / Type A)</name>
    <dbReference type="NCBI Taxonomy" id="289380"/>
    <lineage>
        <taxon>Bacteria</taxon>
        <taxon>Bacillati</taxon>
        <taxon>Bacillota</taxon>
        <taxon>Clostridia</taxon>
        <taxon>Eubacteriales</taxon>
        <taxon>Clostridiaceae</taxon>
        <taxon>Clostridium</taxon>
    </lineage>
</organism>
<dbReference type="EMBL" id="CP000312">
    <property type="protein sequence ID" value="ABG86252.1"/>
    <property type="molecule type" value="Genomic_DNA"/>
</dbReference>
<dbReference type="RefSeq" id="WP_011593039.1">
    <property type="nucleotide sequence ID" value="NC_008262.1"/>
</dbReference>
<dbReference type="KEGG" id="cpr:CPR_2251"/>
<dbReference type="BioCyc" id="CPER289380:GI76-2265-MONOMER"/>
<dbReference type="Proteomes" id="UP000001824">
    <property type="component" value="Chromosome"/>
</dbReference>
<dbReference type="HAMAP" id="MF_00489">
    <property type="entry name" value="UPF0178"/>
    <property type="match status" value="1"/>
</dbReference>
<dbReference type="InterPro" id="IPR003791">
    <property type="entry name" value="UPF0178"/>
</dbReference>
<dbReference type="NCBIfam" id="NF001095">
    <property type="entry name" value="PRK00124.1"/>
    <property type="match status" value="1"/>
</dbReference>
<dbReference type="PANTHER" id="PTHR35146">
    <property type="entry name" value="UPF0178 PROTEIN YAII"/>
    <property type="match status" value="1"/>
</dbReference>
<dbReference type="PANTHER" id="PTHR35146:SF1">
    <property type="entry name" value="UPF0178 PROTEIN YAII"/>
    <property type="match status" value="1"/>
</dbReference>
<dbReference type="Pfam" id="PF02639">
    <property type="entry name" value="DUF188"/>
    <property type="match status" value="1"/>
</dbReference>
<comment type="similarity">
    <text evidence="1">Belongs to the UPF0178 family.</text>
</comment>
<protein>
    <recommendedName>
        <fullName evidence="1">UPF0178 protein CPR_2251</fullName>
    </recommendedName>
</protein>
<name>Y2251_CLOPS</name>
<sequence length="149" mass="16889">MKIIIDGDGCAGRDIIEKVGKKHSVKILIYCTINHMINSDYSEVRMVDDGFQSVDMYVANNTYENDIVITQDYGVAAMALGKGALAISPRGYIYDNDNIDRLLFERHLSQKNRRAGGKSKGNHKRNKEDDDRLYYNLEVLIEKVKAISN</sequence>
<reference key="1">
    <citation type="journal article" date="2006" name="Genome Res.">
        <title>Skewed genomic variability in strains of the toxigenic bacterial pathogen, Clostridium perfringens.</title>
        <authorList>
            <person name="Myers G.S.A."/>
            <person name="Rasko D.A."/>
            <person name="Cheung J.K."/>
            <person name="Ravel J."/>
            <person name="Seshadri R."/>
            <person name="DeBoy R.T."/>
            <person name="Ren Q."/>
            <person name="Varga J."/>
            <person name="Awad M.M."/>
            <person name="Brinkac L.M."/>
            <person name="Daugherty S.C."/>
            <person name="Haft D.H."/>
            <person name="Dodson R.J."/>
            <person name="Madupu R."/>
            <person name="Nelson W.C."/>
            <person name="Rosovitz M.J."/>
            <person name="Sullivan S.A."/>
            <person name="Khouri H."/>
            <person name="Dimitrov G.I."/>
            <person name="Watkins K.L."/>
            <person name="Mulligan S."/>
            <person name="Benton J."/>
            <person name="Radune D."/>
            <person name="Fisher D.J."/>
            <person name="Atkins H.S."/>
            <person name="Hiscox T."/>
            <person name="Jost B.H."/>
            <person name="Billington S.J."/>
            <person name="Songer J.G."/>
            <person name="McClane B.A."/>
            <person name="Titball R.W."/>
            <person name="Rood J.I."/>
            <person name="Melville S.B."/>
            <person name="Paulsen I.T."/>
        </authorList>
    </citation>
    <scope>NUCLEOTIDE SEQUENCE [LARGE SCALE GENOMIC DNA]</scope>
    <source>
        <strain>SM101 / Type A</strain>
    </source>
</reference>
<feature type="chain" id="PRO_1000014418" description="UPF0178 protein CPR_2251">
    <location>
        <begin position="1"/>
        <end position="149"/>
    </location>
</feature>